<accession>Q6BTW5</accession>
<sequence>METIYDEIEIEDFTFDPVTQLFQYPCPCGDRFAVSIDDLNDGEDIAVCPSCSLMVKVIFEPEDLQEYYDEI</sequence>
<gene>
    <name type="primary">DPH3</name>
    <name type="ordered locus">DEHA2C15400g</name>
</gene>
<dbReference type="EMBL" id="CR382135">
    <property type="protein sequence ID" value="CAG86436.2"/>
    <property type="status" value="ALT_INIT"/>
    <property type="molecule type" value="Genomic_DNA"/>
</dbReference>
<dbReference type="RefSeq" id="XP_458354.2">
    <property type="nucleotide sequence ID" value="XM_458354.2"/>
</dbReference>
<dbReference type="SMR" id="Q6BTW5"/>
<dbReference type="FunCoup" id="Q6BTW5">
    <property type="interactions" value="352"/>
</dbReference>
<dbReference type="STRING" id="284592.Q6BTW5"/>
<dbReference type="GeneID" id="2900621"/>
<dbReference type="KEGG" id="dha:DEHA2C15400g"/>
<dbReference type="eggNOG" id="KOG2923">
    <property type="taxonomic scope" value="Eukaryota"/>
</dbReference>
<dbReference type="HOGENOM" id="CLU_1855219_0_0_1"/>
<dbReference type="InParanoid" id="Q6BTW5"/>
<dbReference type="OrthoDB" id="66964at2759"/>
<dbReference type="UniPathway" id="UPA00559"/>
<dbReference type="Proteomes" id="UP000000599">
    <property type="component" value="Chromosome C"/>
</dbReference>
<dbReference type="GO" id="GO:0005737">
    <property type="term" value="C:cytoplasm"/>
    <property type="evidence" value="ECO:0007669"/>
    <property type="project" value="UniProtKB-SubCell"/>
</dbReference>
<dbReference type="GO" id="GO:0005634">
    <property type="term" value="C:nucleus"/>
    <property type="evidence" value="ECO:0007669"/>
    <property type="project" value="UniProtKB-SubCell"/>
</dbReference>
<dbReference type="GO" id="GO:0008198">
    <property type="term" value="F:ferrous iron binding"/>
    <property type="evidence" value="ECO:0000250"/>
    <property type="project" value="UniProtKB"/>
</dbReference>
<dbReference type="GO" id="GO:0034986">
    <property type="term" value="F:iron chaperone activity"/>
    <property type="evidence" value="ECO:0000250"/>
    <property type="project" value="UniProtKB"/>
</dbReference>
<dbReference type="GO" id="GO:0016491">
    <property type="term" value="F:oxidoreductase activity"/>
    <property type="evidence" value="ECO:0007669"/>
    <property type="project" value="UniProtKB-KW"/>
</dbReference>
<dbReference type="GO" id="GO:0017183">
    <property type="term" value="P:protein histidyl modification to diphthamide"/>
    <property type="evidence" value="ECO:0000250"/>
    <property type="project" value="UniProtKB"/>
</dbReference>
<dbReference type="GO" id="GO:0002926">
    <property type="term" value="P:tRNA wobble base 5-methoxycarbonylmethyl-2-thiouridinylation"/>
    <property type="evidence" value="ECO:0000250"/>
    <property type="project" value="UniProtKB"/>
</dbReference>
<dbReference type="FunFam" id="3.10.660.10:FF:000001">
    <property type="entry name" value="Diphthamide biosynthesis 3"/>
    <property type="match status" value="1"/>
</dbReference>
<dbReference type="Gene3D" id="3.10.660.10">
    <property type="entry name" value="DPH Zinc finger"/>
    <property type="match status" value="1"/>
</dbReference>
<dbReference type="InterPro" id="IPR044248">
    <property type="entry name" value="DPH3/4-like"/>
</dbReference>
<dbReference type="InterPro" id="IPR007872">
    <property type="entry name" value="DPH_MB_dom"/>
</dbReference>
<dbReference type="InterPro" id="IPR036671">
    <property type="entry name" value="DPH_MB_sf"/>
</dbReference>
<dbReference type="PANTHER" id="PTHR21454:SF31">
    <property type="entry name" value="DIPHTHAMIDE BIOSYNTHESIS PROTEIN 3"/>
    <property type="match status" value="1"/>
</dbReference>
<dbReference type="PANTHER" id="PTHR21454">
    <property type="entry name" value="DPH3 HOMOLOG-RELATED"/>
    <property type="match status" value="1"/>
</dbReference>
<dbReference type="Pfam" id="PF05207">
    <property type="entry name" value="Zn_ribbon_CSL"/>
    <property type="match status" value="1"/>
</dbReference>
<dbReference type="SUPFAM" id="SSF144217">
    <property type="entry name" value="CSL zinc finger"/>
    <property type="match status" value="1"/>
</dbReference>
<dbReference type="PROSITE" id="PS51074">
    <property type="entry name" value="DPH_MB"/>
    <property type="match status" value="1"/>
</dbReference>
<organism>
    <name type="scientific">Debaryomyces hansenii (strain ATCC 36239 / CBS 767 / BCRC 21394 / JCM 1990 / NBRC 0083 / IGC 2968)</name>
    <name type="common">Yeast</name>
    <name type="synonym">Torulaspora hansenii</name>
    <dbReference type="NCBI Taxonomy" id="284592"/>
    <lineage>
        <taxon>Eukaryota</taxon>
        <taxon>Fungi</taxon>
        <taxon>Dikarya</taxon>
        <taxon>Ascomycota</taxon>
        <taxon>Saccharomycotina</taxon>
        <taxon>Pichiomycetes</taxon>
        <taxon>Debaryomycetaceae</taxon>
        <taxon>Debaryomyces</taxon>
    </lineage>
</organism>
<feature type="chain" id="PRO_0000082630" description="Diphthamide biosynthesis protein 3">
    <location>
        <begin position="1"/>
        <end position="71"/>
    </location>
</feature>
<feature type="domain" description="DPH-type MB" evidence="3">
    <location>
        <begin position="4"/>
        <end position="60"/>
    </location>
</feature>
<feature type="binding site" evidence="2">
    <location>
        <position position="26"/>
    </location>
    <ligand>
        <name>Fe cation</name>
        <dbReference type="ChEBI" id="CHEBI:24875"/>
    </ligand>
</feature>
<feature type="binding site" evidence="2">
    <location>
        <position position="28"/>
    </location>
    <ligand>
        <name>Fe cation</name>
        <dbReference type="ChEBI" id="CHEBI:24875"/>
    </ligand>
</feature>
<feature type="binding site" evidence="2">
    <location>
        <position position="48"/>
    </location>
    <ligand>
        <name>Fe cation</name>
        <dbReference type="ChEBI" id="CHEBI:24875"/>
    </ligand>
</feature>
<feature type="binding site" evidence="2">
    <location>
        <position position="51"/>
    </location>
    <ligand>
        <name>Fe cation</name>
        <dbReference type="ChEBI" id="CHEBI:24875"/>
    </ligand>
</feature>
<keyword id="KW-0963">Cytoplasm</keyword>
<keyword id="KW-0408">Iron</keyword>
<keyword id="KW-0479">Metal-binding</keyword>
<keyword id="KW-0539">Nucleus</keyword>
<keyword id="KW-0560">Oxidoreductase</keyword>
<keyword id="KW-1185">Reference proteome</keyword>
<evidence type="ECO:0000250" key="1"/>
<evidence type="ECO:0000250" key="2">
    <source>
        <dbReference type="UniProtKB" id="Q3E840"/>
    </source>
</evidence>
<evidence type="ECO:0000255" key="3">
    <source>
        <dbReference type="PROSITE-ProRule" id="PRU00456"/>
    </source>
</evidence>
<evidence type="ECO:0000305" key="4"/>
<protein>
    <recommendedName>
        <fullName>Diphthamide biosynthesis protein 3</fullName>
    </recommendedName>
</protein>
<comment type="function">
    <text evidence="2">Required for the first step of diphthamide biosynthesis, a post-translational modification of histidine which occurs in elongation factor 2. DPH1 and DPH2 transfer a 3-amino-3-carboxypropyl (ACP) group from S-adenosyl-L-methionine (SAM) to a histidine residue, the reaction is assisted by a reduction system comprising KTI11/DPH3 and a NADH-dependent reductase, predominantly CBR1. Acts as an electron donor to reduce the Fe-S cluster in DPH1-DPH2 keeping the [4Fe-4S] clusters in the active and reduced state. Restores iron to DPH1-DPH2 iron-sulfur clusters which have degraded from [4Fe-4S] to [3Fe-4S] by donating an iron atom to reform [4Fe-4S] clusters, in a manner dependent on the presence of elongation factor 2 and SAM. Associates with the elongator complex and is required for tRNA Wobble base modifications mediated by the elongator complex. The elongator complex is required for multiple tRNA modifications, including mcm5U (5-methoxycarbonylmethyl uridine), mcm5s 2U (5-methoxycarbonylmethyl-2-thiouridine), and ncm5U (5-carbamoylmethyl uridine).</text>
</comment>
<comment type="catalytic activity">
    <reaction evidence="2">
        <text>[3Fe-4S](1+)-[protein] + Fe(2+)-[Dph3] = [3Fe-4S](0)-[protein] + Fe(3+)-[Dph3]</text>
        <dbReference type="Rhea" id="RHEA:71235"/>
        <dbReference type="Rhea" id="RHEA-COMP:17996"/>
        <dbReference type="Rhea" id="RHEA-COMP:17997"/>
        <dbReference type="Rhea" id="RHEA-COMP:18002"/>
        <dbReference type="Rhea" id="RHEA-COMP:18003"/>
        <dbReference type="ChEBI" id="CHEBI:29033"/>
        <dbReference type="ChEBI" id="CHEBI:29034"/>
        <dbReference type="ChEBI" id="CHEBI:33751"/>
        <dbReference type="ChEBI" id="CHEBI:47402"/>
        <dbReference type="ChEBI" id="CHEBI:83228"/>
    </reaction>
</comment>
<comment type="catalytic activity">
    <reaction evidence="2">
        <text>2 [3Fe-4S](0)-[protein] + 2 Fe(2+)-[Dph3] + NADH = 2 [4Fe-4S](1+)-[protein] + 2 [Dph3] + NAD(+) + H(+)</text>
        <dbReference type="Rhea" id="RHEA:71239"/>
        <dbReference type="Rhea" id="RHEA-COMP:17997"/>
        <dbReference type="Rhea" id="RHEA-COMP:17998"/>
        <dbReference type="Rhea" id="RHEA-COMP:18001"/>
        <dbReference type="Rhea" id="RHEA-COMP:18002"/>
        <dbReference type="ChEBI" id="CHEBI:15378"/>
        <dbReference type="ChEBI" id="CHEBI:29033"/>
        <dbReference type="ChEBI" id="CHEBI:33723"/>
        <dbReference type="ChEBI" id="CHEBI:47402"/>
        <dbReference type="ChEBI" id="CHEBI:57540"/>
        <dbReference type="ChEBI" id="CHEBI:57945"/>
        <dbReference type="ChEBI" id="CHEBI:83228"/>
    </reaction>
</comment>
<comment type="cofactor">
    <cofactor evidence="2">
        <name>Fe(2+)</name>
        <dbReference type="ChEBI" id="CHEBI:29033"/>
    </cofactor>
</comment>
<comment type="pathway">
    <text evidence="2">Protein modification; peptidyl-diphthamide biosynthesis.</text>
</comment>
<comment type="subunit">
    <text evidence="2">Component of the 2-(3-amino-3-carboxypropyl)histidine synthase complex composed of DPH1, DPH2, DPH3 and a NADH-dependent reductase, predominantly CBR1.</text>
</comment>
<comment type="subcellular location">
    <subcellularLocation>
        <location evidence="1">Cytoplasm</location>
    </subcellularLocation>
    <subcellularLocation>
        <location evidence="1">Nucleus</location>
    </subcellularLocation>
</comment>
<comment type="domain">
    <text evidence="2">The DPH-type metal-binding (MB) domain can also bind zinc. However, iron is the physiological binding partner as zinc binding impairs the protein electron donor function.</text>
</comment>
<comment type="similarity">
    <text evidence="4">Belongs to the DPH3 family.</text>
</comment>
<comment type="sequence caution" evidence="4">
    <conflict type="erroneous initiation">
        <sequence resource="EMBL-CDS" id="CAG86436"/>
    </conflict>
</comment>
<reference key="1">
    <citation type="journal article" date="2004" name="Nature">
        <title>Genome evolution in yeasts.</title>
        <authorList>
            <person name="Dujon B."/>
            <person name="Sherman D."/>
            <person name="Fischer G."/>
            <person name="Durrens P."/>
            <person name="Casaregola S."/>
            <person name="Lafontaine I."/>
            <person name="de Montigny J."/>
            <person name="Marck C."/>
            <person name="Neuveglise C."/>
            <person name="Talla E."/>
            <person name="Goffard N."/>
            <person name="Frangeul L."/>
            <person name="Aigle M."/>
            <person name="Anthouard V."/>
            <person name="Babour A."/>
            <person name="Barbe V."/>
            <person name="Barnay S."/>
            <person name="Blanchin S."/>
            <person name="Beckerich J.-M."/>
            <person name="Beyne E."/>
            <person name="Bleykasten C."/>
            <person name="Boisrame A."/>
            <person name="Boyer J."/>
            <person name="Cattolico L."/>
            <person name="Confanioleri F."/>
            <person name="de Daruvar A."/>
            <person name="Despons L."/>
            <person name="Fabre E."/>
            <person name="Fairhead C."/>
            <person name="Ferry-Dumazet H."/>
            <person name="Groppi A."/>
            <person name="Hantraye F."/>
            <person name="Hennequin C."/>
            <person name="Jauniaux N."/>
            <person name="Joyet P."/>
            <person name="Kachouri R."/>
            <person name="Kerrest A."/>
            <person name="Koszul R."/>
            <person name="Lemaire M."/>
            <person name="Lesur I."/>
            <person name="Ma L."/>
            <person name="Muller H."/>
            <person name="Nicaud J.-M."/>
            <person name="Nikolski M."/>
            <person name="Oztas S."/>
            <person name="Ozier-Kalogeropoulos O."/>
            <person name="Pellenz S."/>
            <person name="Potier S."/>
            <person name="Richard G.-F."/>
            <person name="Straub M.-L."/>
            <person name="Suleau A."/>
            <person name="Swennen D."/>
            <person name="Tekaia F."/>
            <person name="Wesolowski-Louvel M."/>
            <person name="Westhof E."/>
            <person name="Wirth B."/>
            <person name="Zeniou-Meyer M."/>
            <person name="Zivanovic Y."/>
            <person name="Bolotin-Fukuhara M."/>
            <person name="Thierry A."/>
            <person name="Bouchier C."/>
            <person name="Caudron B."/>
            <person name="Scarpelli C."/>
            <person name="Gaillardin C."/>
            <person name="Weissenbach J."/>
            <person name="Wincker P."/>
            <person name="Souciet J.-L."/>
        </authorList>
    </citation>
    <scope>NUCLEOTIDE SEQUENCE [LARGE SCALE GENOMIC DNA]</scope>
    <source>
        <strain>ATCC 36239 / CBS 767 / BCRC 21394 / JCM 1990 / NBRC 0083 / IGC 2968</strain>
    </source>
</reference>
<name>DPH3_DEBHA</name>
<proteinExistence type="inferred from homology"/>